<evidence type="ECO:0000250" key="1"/>
<evidence type="ECO:0000255" key="2"/>
<evidence type="ECO:0000255" key="3">
    <source>
        <dbReference type="PROSITE-ProRule" id="PRU00521"/>
    </source>
</evidence>
<evidence type="ECO:0000256" key="4">
    <source>
        <dbReference type="SAM" id="MobiDB-lite"/>
    </source>
</evidence>
<accession>Q9EQ31</accession>
<reference key="1">
    <citation type="journal article" date="2001" name="Gene">
        <title>The mouse lp(A3)/Edg7 lysophosphatidic acid receptor gene: genomic structure, chromosomal localization, and expression pattern.</title>
        <authorList>
            <person name="Contos J.J.A."/>
            <person name="Chun J."/>
        </authorList>
    </citation>
    <scope>NUCLEOTIDE SEQUENCE [GENOMIC DNA / MRNA]</scope>
    <source>
        <strain>129/SvJ</strain>
        <strain>Swiss Webster / NIH</strain>
    </source>
</reference>
<reference key="2">
    <citation type="journal article" date="2001" name="Gene">
        <authorList>
            <person name="Contos J.J.A."/>
            <person name="Chun J."/>
        </authorList>
    </citation>
    <scope>ERRATUM OF PUBMED:11313151</scope>
</reference>
<reference key="3">
    <citation type="journal article" date="2010" name="Cell">
        <title>A tissue-specific atlas of mouse protein phosphorylation and expression.</title>
        <authorList>
            <person name="Huttlin E.L."/>
            <person name="Jedrychowski M.P."/>
            <person name="Elias J.E."/>
            <person name="Goswami T."/>
            <person name="Rad R."/>
            <person name="Beausoleil S.A."/>
            <person name="Villen J."/>
            <person name="Haas W."/>
            <person name="Sowa M.E."/>
            <person name="Gygi S.P."/>
        </authorList>
    </citation>
    <scope>IDENTIFICATION BY MASS SPECTROMETRY [LARGE SCALE ANALYSIS]</scope>
    <source>
        <tissue>Testis</tissue>
    </source>
</reference>
<keyword id="KW-1003">Cell membrane</keyword>
<keyword id="KW-0297">G-protein coupled receptor</keyword>
<keyword id="KW-0325">Glycoprotein</keyword>
<keyword id="KW-0449">Lipoprotein</keyword>
<keyword id="KW-0472">Membrane</keyword>
<keyword id="KW-0564">Palmitate</keyword>
<keyword id="KW-0675">Receptor</keyword>
<keyword id="KW-1185">Reference proteome</keyword>
<keyword id="KW-0807">Transducer</keyword>
<keyword id="KW-0812">Transmembrane</keyword>
<keyword id="KW-1133">Transmembrane helix</keyword>
<protein>
    <recommendedName>
        <fullName>Lysophosphatidic acid receptor 3</fullName>
        <shortName>LPA receptor 3</shortName>
        <shortName>LPA-3</shortName>
    </recommendedName>
    <alternativeName>
        <fullName>Lysophosphatidic acid receptor Edg-7</fullName>
    </alternativeName>
</protein>
<sequence>MNECHYDKRMDFFYNRSNTDTADEWTGTKLVIVLCVGTFFCLFIFFSNSLVIAAVITNRKFHFPFYYLLANLAAADFFAGIAYVFLMFNTGPVSKTLTVNRWFLRQGLLDTSLTASLANLLVIAVERHMSIMRMRVHSNLTKKRVTLLILLVWAIAIFMGAVPTLGWNCLCNISACSSLAPIYSRSYLIFWTVSNLLAFFIMVAVYVRIYMYVKRKTNVLSPHTSGSISRRRAPMKLMKTVMTVLGAFVVCWTPGLVVLLLDGLNCKQCNVQHVKRWFLLLALLNSVMNPIIYSYKDEDMYNTMRKMICCALQDSNTERRPSRNPSTIHSRSETGSQYLEDSISQGPVCNKNGS</sequence>
<proteinExistence type="evidence at protein level"/>
<feature type="chain" id="PRO_0000069434" description="Lysophosphatidic acid receptor 3">
    <location>
        <begin position="1"/>
        <end position="354"/>
    </location>
</feature>
<feature type="topological domain" description="Extracellular" evidence="2">
    <location>
        <begin position="1"/>
        <end position="31"/>
    </location>
</feature>
<feature type="transmembrane region" description="Helical; Name=1" evidence="2">
    <location>
        <begin position="32"/>
        <end position="52"/>
    </location>
</feature>
<feature type="topological domain" description="Cytoplasmic" evidence="2">
    <location>
        <begin position="53"/>
        <end position="67"/>
    </location>
</feature>
<feature type="transmembrane region" description="Helical; Name=2" evidence="2">
    <location>
        <begin position="68"/>
        <end position="88"/>
    </location>
</feature>
<feature type="topological domain" description="Extracellular" evidence="2">
    <location>
        <begin position="89"/>
        <end position="101"/>
    </location>
</feature>
<feature type="transmembrane region" description="Helical; Name=3" evidence="2">
    <location>
        <begin position="102"/>
        <end position="124"/>
    </location>
</feature>
<feature type="topological domain" description="Cytoplasmic" evidence="2">
    <location>
        <begin position="125"/>
        <end position="146"/>
    </location>
</feature>
<feature type="transmembrane region" description="Helical; Name=4" evidence="2">
    <location>
        <begin position="147"/>
        <end position="167"/>
    </location>
</feature>
<feature type="topological domain" description="Extracellular" evidence="2">
    <location>
        <begin position="168"/>
        <end position="186"/>
    </location>
</feature>
<feature type="transmembrane region" description="Helical; Name=5" evidence="2">
    <location>
        <begin position="187"/>
        <end position="207"/>
    </location>
</feature>
<feature type="topological domain" description="Cytoplasmic" evidence="2">
    <location>
        <begin position="208"/>
        <end position="240"/>
    </location>
</feature>
<feature type="transmembrane region" description="Helical; Name=6" evidence="2">
    <location>
        <begin position="241"/>
        <end position="261"/>
    </location>
</feature>
<feature type="topological domain" description="Extracellular" evidence="2">
    <location>
        <begin position="262"/>
        <end position="276"/>
    </location>
</feature>
<feature type="transmembrane region" description="Helical; Name=7" evidence="2">
    <location>
        <begin position="277"/>
        <end position="295"/>
    </location>
</feature>
<feature type="topological domain" description="Cytoplasmic" evidence="2">
    <location>
        <begin position="296"/>
        <end position="354"/>
    </location>
</feature>
<feature type="region of interest" description="Disordered" evidence="4">
    <location>
        <begin position="315"/>
        <end position="354"/>
    </location>
</feature>
<feature type="compositionally biased region" description="Polar residues" evidence="4">
    <location>
        <begin position="323"/>
        <end position="354"/>
    </location>
</feature>
<feature type="lipid moiety-binding region" description="S-palmitoyl cysteine" evidence="1">
    <location>
        <position position="309"/>
    </location>
</feature>
<feature type="glycosylation site" description="N-linked (GlcNAc...) asparagine" evidence="2">
    <location>
        <position position="15"/>
    </location>
</feature>
<feature type="glycosylation site" description="N-linked (GlcNAc...) asparagine" evidence="2">
    <location>
        <position position="172"/>
    </location>
</feature>
<comment type="function">
    <text>Receptor for lysophosphatidic acid (LPA), a mediator of diverse cellular activities. Seems to be coupled to the G(i)/G(o) and G(q) families of heteromeric G proteins.</text>
</comment>
<comment type="subcellular location">
    <subcellularLocation>
        <location>Cell membrane</location>
        <topology>Multi-pass membrane protein</topology>
    </subcellularLocation>
</comment>
<comment type="tissue specificity">
    <text>Most abundantly expressed in testes, kidney, and lung, with moderate levels in small intestine, and low levels in heart, stomach, spleen, and adult and perinatal brain. Little or no expression in embryonic brain, liver, or thymus.</text>
</comment>
<comment type="similarity">
    <text evidence="3">Belongs to the G-protein coupled receptor 1 family.</text>
</comment>
<organism>
    <name type="scientific">Mus musculus</name>
    <name type="common">Mouse</name>
    <dbReference type="NCBI Taxonomy" id="10090"/>
    <lineage>
        <taxon>Eukaryota</taxon>
        <taxon>Metazoa</taxon>
        <taxon>Chordata</taxon>
        <taxon>Craniata</taxon>
        <taxon>Vertebrata</taxon>
        <taxon>Euteleostomi</taxon>
        <taxon>Mammalia</taxon>
        <taxon>Eutheria</taxon>
        <taxon>Euarchontoglires</taxon>
        <taxon>Glires</taxon>
        <taxon>Rodentia</taxon>
        <taxon>Myomorpha</taxon>
        <taxon>Muroidea</taxon>
        <taxon>Muridae</taxon>
        <taxon>Murinae</taxon>
        <taxon>Mus</taxon>
        <taxon>Mus</taxon>
    </lineage>
</organism>
<gene>
    <name type="primary">Lpar3</name>
    <name type="synonym">Edg7</name>
    <name type="synonym">Lpa3</name>
</gene>
<name>LPAR3_MOUSE</name>
<dbReference type="EMBL" id="AF293845">
    <property type="protein sequence ID" value="AAG13674.1"/>
    <property type="molecule type" value="mRNA"/>
</dbReference>
<dbReference type="EMBL" id="AF272365">
    <property type="protein sequence ID" value="AAK02017.1"/>
    <property type="molecule type" value="Genomic_DNA"/>
</dbReference>
<dbReference type="EMBL" id="AF272364">
    <property type="protein sequence ID" value="AAK02017.1"/>
    <property type="status" value="JOINED"/>
    <property type="molecule type" value="Genomic_DNA"/>
</dbReference>
<dbReference type="CCDS" id="CCDS17901.1"/>
<dbReference type="RefSeq" id="NP_075359.1">
    <property type="nucleotide sequence ID" value="NM_022983.4"/>
</dbReference>
<dbReference type="SMR" id="Q9EQ31"/>
<dbReference type="FunCoup" id="Q9EQ31">
    <property type="interactions" value="1466"/>
</dbReference>
<dbReference type="STRING" id="10090.ENSMUSP00000037712"/>
<dbReference type="GuidetoPHARMACOLOGY" id="274"/>
<dbReference type="GlyCosmos" id="Q9EQ31">
    <property type="glycosylation" value="2 sites, No reported glycans"/>
</dbReference>
<dbReference type="GlyGen" id="Q9EQ31">
    <property type="glycosylation" value="2 sites"/>
</dbReference>
<dbReference type="iPTMnet" id="Q9EQ31"/>
<dbReference type="PhosphoSitePlus" id="Q9EQ31"/>
<dbReference type="PaxDb" id="10090-ENSMUSP00000037712"/>
<dbReference type="ProteomicsDB" id="291961"/>
<dbReference type="Antibodypedia" id="2955">
    <property type="antibodies" value="337 antibodies from 36 providers"/>
</dbReference>
<dbReference type="DNASU" id="65086"/>
<dbReference type="Ensembl" id="ENSMUST00000039164.4">
    <property type="protein sequence ID" value="ENSMUSP00000037712.3"/>
    <property type="gene ID" value="ENSMUSG00000036832.6"/>
</dbReference>
<dbReference type="GeneID" id="65086"/>
<dbReference type="KEGG" id="mmu:65086"/>
<dbReference type="UCSC" id="uc008rra.2">
    <property type="organism name" value="mouse"/>
</dbReference>
<dbReference type="AGR" id="MGI:1929469"/>
<dbReference type="CTD" id="23566"/>
<dbReference type="MGI" id="MGI:1929469">
    <property type="gene designation" value="Lpar3"/>
</dbReference>
<dbReference type="VEuPathDB" id="HostDB:ENSMUSG00000036832"/>
<dbReference type="eggNOG" id="KOG3656">
    <property type="taxonomic scope" value="Eukaryota"/>
</dbReference>
<dbReference type="GeneTree" id="ENSGT01120000271896"/>
<dbReference type="HOGENOM" id="CLU_047979_0_0_1"/>
<dbReference type="InParanoid" id="Q9EQ31"/>
<dbReference type="OMA" id="HMSVVRM"/>
<dbReference type="OrthoDB" id="9863803at2759"/>
<dbReference type="PhylomeDB" id="Q9EQ31"/>
<dbReference type="TreeFam" id="TF330052"/>
<dbReference type="Reactome" id="R-MMU-416476">
    <property type="pathway name" value="G alpha (q) signalling events"/>
</dbReference>
<dbReference type="Reactome" id="R-MMU-418594">
    <property type="pathway name" value="G alpha (i) signalling events"/>
</dbReference>
<dbReference type="Reactome" id="R-MMU-419408">
    <property type="pathway name" value="Lysosphingolipid and LPA receptors"/>
</dbReference>
<dbReference type="BioGRID-ORCS" id="65086">
    <property type="hits" value="2 hits in 78 CRISPR screens"/>
</dbReference>
<dbReference type="PRO" id="PR:Q9EQ31"/>
<dbReference type="Proteomes" id="UP000000589">
    <property type="component" value="Chromosome 3"/>
</dbReference>
<dbReference type="RNAct" id="Q9EQ31">
    <property type="molecule type" value="protein"/>
</dbReference>
<dbReference type="Bgee" id="ENSMUSG00000036832">
    <property type="expression patterns" value="Expressed in lumbar dorsal root ganglion and 117 other cell types or tissues"/>
</dbReference>
<dbReference type="ExpressionAtlas" id="Q9EQ31">
    <property type="expression patterns" value="baseline and differential"/>
</dbReference>
<dbReference type="GO" id="GO:0030424">
    <property type="term" value="C:axon"/>
    <property type="evidence" value="ECO:0000314"/>
    <property type="project" value="MGI"/>
</dbReference>
<dbReference type="GO" id="GO:0005929">
    <property type="term" value="C:cilium"/>
    <property type="evidence" value="ECO:0007669"/>
    <property type="project" value="Ensembl"/>
</dbReference>
<dbReference type="GO" id="GO:0005886">
    <property type="term" value="C:plasma membrane"/>
    <property type="evidence" value="ECO:0007669"/>
    <property type="project" value="UniProtKB-SubCell"/>
</dbReference>
<dbReference type="GO" id="GO:0001965">
    <property type="term" value="F:G-protein alpha-subunit binding"/>
    <property type="evidence" value="ECO:0007669"/>
    <property type="project" value="Ensembl"/>
</dbReference>
<dbReference type="GO" id="GO:0070915">
    <property type="term" value="F:lysophosphatidic acid receptor activity"/>
    <property type="evidence" value="ECO:0007669"/>
    <property type="project" value="InterPro"/>
</dbReference>
<dbReference type="GO" id="GO:0005543">
    <property type="term" value="F:phospholipid binding"/>
    <property type="evidence" value="ECO:0007669"/>
    <property type="project" value="Ensembl"/>
</dbReference>
<dbReference type="GO" id="GO:0032060">
    <property type="term" value="P:bleb assembly"/>
    <property type="evidence" value="ECO:0000316"/>
    <property type="project" value="MGI"/>
</dbReference>
<dbReference type="GO" id="GO:0048668">
    <property type="term" value="P:collateral sprouting"/>
    <property type="evidence" value="ECO:0000315"/>
    <property type="project" value="MGI"/>
</dbReference>
<dbReference type="GO" id="GO:0007186">
    <property type="term" value="P:G protein-coupled receptor signaling pathway"/>
    <property type="evidence" value="ECO:0000315"/>
    <property type="project" value="MGI"/>
</dbReference>
<dbReference type="GO" id="GO:0010467">
    <property type="term" value="P:gene expression"/>
    <property type="evidence" value="ECO:0000315"/>
    <property type="project" value="MGI"/>
</dbReference>
<dbReference type="GO" id="GO:0051928">
    <property type="term" value="P:positive regulation of calcium ion transport"/>
    <property type="evidence" value="ECO:0007669"/>
    <property type="project" value="Ensembl"/>
</dbReference>
<dbReference type="GO" id="GO:0048672">
    <property type="term" value="P:positive regulation of collateral sprouting"/>
    <property type="evidence" value="ECO:0000315"/>
    <property type="project" value="MGI"/>
</dbReference>
<dbReference type="GO" id="GO:0043410">
    <property type="term" value="P:positive regulation of MAPK cascade"/>
    <property type="evidence" value="ECO:0000314"/>
    <property type="project" value="MGI"/>
</dbReference>
<dbReference type="CDD" id="cd15343">
    <property type="entry name" value="7tmA_LPAR3_Edg7"/>
    <property type="match status" value="1"/>
</dbReference>
<dbReference type="FunFam" id="1.20.1070.10:FF:000025">
    <property type="entry name" value="Lysophosphatidic acid receptor 1"/>
    <property type="match status" value="1"/>
</dbReference>
<dbReference type="Gene3D" id="1.20.1070.10">
    <property type="entry name" value="Rhodopsin 7-helix transmembrane proteins"/>
    <property type="match status" value="1"/>
</dbReference>
<dbReference type="InterPro" id="IPR000276">
    <property type="entry name" value="GPCR_Rhodpsn"/>
</dbReference>
<dbReference type="InterPro" id="IPR017452">
    <property type="entry name" value="GPCR_Rhodpsn_7TM"/>
</dbReference>
<dbReference type="InterPro" id="IPR004065">
    <property type="entry name" value="LPA_rcpt"/>
</dbReference>
<dbReference type="InterPro" id="IPR005385">
    <property type="entry name" value="LPA_rcpt_EDG7"/>
</dbReference>
<dbReference type="PANTHER" id="PTHR22750">
    <property type="entry name" value="G-PROTEIN COUPLED RECEPTOR"/>
    <property type="match status" value="1"/>
</dbReference>
<dbReference type="Pfam" id="PF00001">
    <property type="entry name" value="7tm_1"/>
    <property type="match status" value="1"/>
</dbReference>
<dbReference type="PRINTS" id="PR01560">
    <property type="entry name" value="EDG7RECEPTOR"/>
</dbReference>
<dbReference type="PRINTS" id="PR00237">
    <property type="entry name" value="GPCRRHODOPSN"/>
</dbReference>
<dbReference type="PRINTS" id="PR01527">
    <property type="entry name" value="LPARECEPTOR"/>
</dbReference>
<dbReference type="SMART" id="SM01381">
    <property type="entry name" value="7TM_GPCR_Srsx"/>
    <property type="match status" value="1"/>
</dbReference>
<dbReference type="SUPFAM" id="SSF81321">
    <property type="entry name" value="Family A G protein-coupled receptor-like"/>
    <property type="match status" value="1"/>
</dbReference>
<dbReference type="PROSITE" id="PS00237">
    <property type="entry name" value="G_PROTEIN_RECEP_F1_1"/>
    <property type="match status" value="1"/>
</dbReference>
<dbReference type="PROSITE" id="PS50262">
    <property type="entry name" value="G_PROTEIN_RECEP_F1_2"/>
    <property type="match status" value="1"/>
</dbReference>